<feature type="chain" id="PRO_1000052204" description="Large ribosomal subunit protein uL24">
    <location>
        <begin position="1"/>
        <end position="104"/>
    </location>
</feature>
<gene>
    <name evidence="1" type="primary">rplX</name>
    <name type="ordered locus">CKO_04723</name>
</gene>
<proteinExistence type="inferred from homology"/>
<reference key="1">
    <citation type="submission" date="2007-08" db="EMBL/GenBank/DDBJ databases">
        <authorList>
            <consortium name="The Citrobacter koseri Genome Sequencing Project"/>
            <person name="McClelland M."/>
            <person name="Sanderson E.K."/>
            <person name="Porwollik S."/>
            <person name="Spieth J."/>
            <person name="Clifton W.S."/>
            <person name="Latreille P."/>
            <person name="Courtney L."/>
            <person name="Wang C."/>
            <person name="Pepin K."/>
            <person name="Bhonagiri V."/>
            <person name="Nash W."/>
            <person name="Johnson M."/>
            <person name="Thiruvilangam P."/>
            <person name="Wilson R."/>
        </authorList>
    </citation>
    <scope>NUCLEOTIDE SEQUENCE [LARGE SCALE GENOMIC DNA]</scope>
    <source>
        <strain>ATCC BAA-895 / CDC 4225-83 / SGSC4696</strain>
    </source>
</reference>
<protein>
    <recommendedName>
        <fullName evidence="1">Large ribosomal subunit protein uL24</fullName>
    </recommendedName>
    <alternativeName>
        <fullName evidence="2">50S ribosomal protein L24</fullName>
    </alternativeName>
</protein>
<name>RL24_CITK8</name>
<comment type="function">
    <text evidence="1">One of two assembly initiator proteins, it binds directly to the 5'-end of the 23S rRNA, where it nucleates assembly of the 50S subunit.</text>
</comment>
<comment type="function">
    <text evidence="1">One of the proteins that surrounds the polypeptide exit tunnel on the outside of the subunit.</text>
</comment>
<comment type="subunit">
    <text evidence="1">Part of the 50S ribosomal subunit.</text>
</comment>
<comment type="similarity">
    <text evidence="1">Belongs to the universal ribosomal protein uL24 family.</text>
</comment>
<evidence type="ECO:0000255" key="1">
    <source>
        <dbReference type="HAMAP-Rule" id="MF_01326"/>
    </source>
</evidence>
<evidence type="ECO:0000305" key="2"/>
<accession>A8AQK5</accession>
<dbReference type="EMBL" id="CP000822">
    <property type="protein sequence ID" value="ABV15768.1"/>
    <property type="molecule type" value="Genomic_DNA"/>
</dbReference>
<dbReference type="RefSeq" id="WP_012135426.1">
    <property type="nucleotide sequence ID" value="NC_009792.1"/>
</dbReference>
<dbReference type="SMR" id="A8AQK5"/>
<dbReference type="STRING" id="290338.CKO_04723"/>
<dbReference type="GeneID" id="45138243"/>
<dbReference type="KEGG" id="cko:CKO_04723"/>
<dbReference type="HOGENOM" id="CLU_093315_2_2_6"/>
<dbReference type="OrthoDB" id="9807419at2"/>
<dbReference type="Proteomes" id="UP000008148">
    <property type="component" value="Chromosome"/>
</dbReference>
<dbReference type="GO" id="GO:0005829">
    <property type="term" value="C:cytosol"/>
    <property type="evidence" value="ECO:0007669"/>
    <property type="project" value="UniProtKB-ARBA"/>
</dbReference>
<dbReference type="GO" id="GO:1990904">
    <property type="term" value="C:ribonucleoprotein complex"/>
    <property type="evidence" value="ECO:0007669"/>
    <property type="project" value="UniProtKB-KW"/>
</dbReference>
<dbReference type="GO" id="GO:0005840">
    <property type="term" value="C:ribosome"/>
    <property type="evidence" value="ECO:0007669"/>
    <property type="project" value="UniProtKB-KW"/>
</dbReference>
<dbReference type="GO" id="GO:0019843">
    <property type="term" value="F:rRNA binding"/>
    <property type="evidence" value="ECO:0007669"/>
    <property type="project" value="UniProtKB-UniRule"/>
</dbReference>
<dbReference type="GO" id="GO:0003735">
    <property type="term" value="F:structural constituent of ribosome"/>
    <property type="evidence" value="ECO:0007669"/>
    <property type="project" value="InterPro"/>
</dbReference>
<dbReference type="GO" id="GO:0006412">
    <property type="term" value="P:translation"/>
    <property type="evidence" value="ECO:0007669"/>
    <property type="project" value="UniProtKB-UniRule"/>
</dbReference>
<dbReference type="CDD" id="cd06089">
    <property type="entry name" value="KOW_RPL26"/>
    <property type="match status" value="1"/>
</dbReference>
<dbReference type="FunFam" id="2.30.30.30:FF:000004">
    <property type="entry name" value="50S ribosomal protein L24"/>
    <property type="match status" value="1"/>
</dbReference>
<dbReference type="Gene3D" id="2.30.30.30">
    <property type="match status" value="1"/>
</dbReference>
<dbReference type="HAMAP" id="MF_01326_B">
    <property type="entry name" value="Ribosomal_uL24_B"/>
    <property type="match status" value="1"/>
</dbReference>
<dbReference type="InterPro" id="IPR005824">
    <property type="entry name" value="KOW"/>
</dbReference>
<dbReference type="InterPro" id="IPR014722">
    <property type="entry name" value="Rib_uL2_dom2"/>
</dbReference>
<dbReference type="InterPro" id="IPR003256">
    <property type="entry name" value="Ribosomal_uL24"/>
</dbReference>
<dbReference type="InterPro" id="IPR005825">
    <property type="entry name" value="Ribosomal_uL24_CS"/>
</dbReference>
<dbReference type="InterPro" id="IPR041988">
    <property type="entry name" value="Ribosomal_uL24_KOW"/>
</dbReference>
<dbReference type="InterPro" id="IPR008991">
    <property type="entry name" value="Translation_prot_SH3-like_sf"/>
</dbReference>
<dbReference type="NCBIfam" id="TIGR01079">
    <property type="entry name" value="rplX_bact"/>
    <property type="match status" value="1"/>
</dbReference>
<dbReference type="PANTHER" id="PTHR12903">
    <property type="entry name" value="MITOCHONDRIAL RIBOSOMAL PROTEIN L24"/>
    <property type="match status" value="1"/>
</dbReference>
<dbReference type="Pfam" id="PF00467">
    <property type="entry name" value="KOW"/>
    <property type="match status" value="1"/>
</dbReference>
<dbReference type="Pfam" id="PF17136">
    <property type="entry name" value="ribosomal_L24"/>
    <property type="match status" value="1"/>
</dbReference>
<dbReference type="SMART" id="SM00739">
    <property type="entry name" value="KOW"/>
    <property type="match status" value="1"/>
</dbReference>
<dbReference type="SUPFAM" id="SSF50104">
    <property type="entry name" value="Translation proteins SH3-like domain"/>
    <property type="match status" value="1"/>
</dbReference>
<dbReference type="PROSITE" id="PS01108">
    <property type="entry name" value="RIBOSOMAL_L24"/>
    <property type="match status" value="1"/>
</dbReference>
<sequence>MAAKIRRDDEVIVLTGKDKGKRGKVKNVLSSGKVIVEGINLVKKHQKPVPALNQPGGIVEKEAAIQVSNIAIFNAATGKADRVGFRFEDGKKVRFFKSNSETIK</sequence>
<organism>
    <name type="scientific">Citrobacter koseri (strain ATCC BAA-895 / CDC 4225-83 / SGSC4696)</name>
    <dbReference type="NCBI Taxonomy" id="290338"/>
    <lineage>
        <taxon>Bacteria</taxon>
        <taxon>Pseudomonadati</taxon>
        <taxon>Pseudomonadota</taxon>
        <taxon>Gammaproteobacteria</taxon>
        <taxon>Enterobacterales</taxon>
        <taxon>Enterobacteriaceae</taxon>
        <taxon>Citrobacter</taxon>
    </lineage>
</organism>
<keyword id="KW-1185">Reference proteome</keyword>
<keyword id="KW-0687">Ribonucleoprotein</keyword>
<keyword id="KW-0689">Ribosomal protein</keyword>
<keyword id="KW-0694">RNA-binding</keyword>
<keyword id="KW-0699">rRNA-binding</keyword>